<sequence>MGCCLTVGPNEALVVSGACCGSDAKTYVVGGWAWAWWLISDTQRITLEIMTLQPKCEDVETAEGVAITVTGVAQVKVMTDQDLLAVACEQFLGKSVMEIKAVVLQTLEGHLRSILGTLTVEQIYQDRDEFARLVREVAAPDVGRMGIEILSFTIKDVYDKLDYLSSLGKTQTAAVQRDADIGVAEAERDAGIREAECKKEMMDVKFLADTRMADSKRELELQKAAFNQEVNTKKAESQLAYELEAAKEQQKIRLEEIEIEVVQRKKQISIEEKEIERTEKELIATVKRPAEAEAYKMQQLAEGQKLKKVLIAQAESEKIRKIGEAEAISISSVGKAEAESMRLKAEAYQQYGEAAKTALVLEALPKIAGKVAAPLARTNEIVILSGDGSRVSGEVNRLLAELPVSINALTGVDLSKMPLLQKMTGAQA</sequence>
<organism>
    <name type="scientific">Carassius auratus</name>
    <name type="common">Goldfish</name>
    <dbReference type="NCBI Taxonomy" id="7957"/>
    <lineage>
        <taxon>Eukaryota</taxon>
        <taxon>Metazoa</taxon>
        <taxon>Chordata</taxon>
        <taxon>Craniata</taxon>
        <taxon>Vertebrata</taxon>
        <taxon>Euteleostomi</taxon>
        <taxon>Actinopterygii</taxon>
        <taxon>Neopterygii</taxon>
        <taxon>Teleostei</taxon>
        <taxon>Ostariophysi</taxon>
        <taxon>Cypriniformes</taxon>
        <taxon>Cyprinidae</taxon>
        <taxon>Cyprininae</taxon>
        <taxon>Carassius</taxon>
    </lineage>
</organism>
<keyword id="KW-0130">Cell adhesion</keyword>
<keyword id="KW-0903">Direct protein sequencing</keyword>
<keyword id="KW-0967">Endosome</keyword>
<keyword id="KW-0449">Lipoprotein</keyword>
<keyword id="KW-0472">Membrane</keyword>
<keyword id="KW-0564">Palmitate</keyword>
<keyword id="KW-1185">Reference proteome</keyword>
<gene>
    <name type="primary">flot2</name>
</gene>
<name>FLOT2_CARAU</name>
<comment type="function">
    <text>May play a role in axon growth and regeneration. May be involved in epidermal cell adhesion and epidermal structure and function.</text>
</comment>
<comment type="subunit">
    <text evidence="1">Heterooligomeric complex of flotillins 1 and 2.</text>
</comment>
<comment type="subcellular location">
    <subcellularLocation>
        <location evidence="1">Membrane</location>
    </subcellularLocation>
    <subcellularLocation>
        <location evidence="1">Endosome</location>
    </subcellularLocation>
    <text evidence="1">In neuronal cells, associated with GPI-anchored cell-adhesion molecules.</text>
</comment>
<comment type="tissue specificity">
    <text>Normally expressed in growing retinal exons of newly differentiated ganglion cells at the retinal margin. After optic nerve injury, expressed in all retinal ganglion cells and retinal axons. Also expressed in endothelial cells, spinal cord, larval and adult skin, muscle processes, thymus and gill macrophages.</text>
</comment>
<comment type="induction">
    <text>By optic nerve injury.</text>
</comment>
<comment type="PTM">
    <text evidence="1">Palmitoylation may be required for the formation of higher order complexes and for neurite outgrowth in cultured neural stem cells.</text>
</comment>
<comment type="similarity">
    <text evidence="2">Belongs to the band 7/mec-2 family. Flotillin subfamily.</text>
</comment>
<feature type="chain" id="PRO_0000094053" description="Flotillin-2">
    <location>
        <begin position="1"/>
        <end position="428"/>
    </location>
</feature>
<feature type="lipid moiety-binding region" description="S-palmitoyl cysteine" evidence="1">
    <location>
        <position position="4"/>
    </location>
</feature>
<feature type="lipid moiety-binding region" description="S-palmitoyl cysteine" evidence="1">
    <location>
        <position position="19"/>
    </location>
</feature>
<feature type="lipid moiety-binding region" description="S-palmitoyl cysteine" evidence="1">
    <location>
        <position position="20"/>
    </location>
</feature>
<evidence type="ECO:0000250" key="1"/>
<evidence type="ECO:0000305" key="2"/>
<dbReference type="EMBL" id="L36867">
    <property type="protein sequence ID" value="AAB61951.1"/>
    <property type="molecule type" value="mRNA"/>
</dbReference>
<dbReference type="SMR" id="O42305"/>
<dbReference type="Proteomes" id="UP000515129">
    <property type="component" value="Unplaced"/>
</dbReference>
<dbReference type="GO" id="GO:0030139">
    <property type="term" value="C:endocytic vesicle"/>
    <property type="evidence" value="ECO:0000250"/>
    <property type="project" value="UniProtKB"/>
</dbReference>
<dbReference type="GO" id="GO:0005768">
    <property type="term" value="C:endosome"/>
    <property type="evidence" value="ECO:0000250"/>
    <property type="project" value="UniProtKB"/>
</dbReference>
<dbReference type="GO" id="GO:0016600">
    <property type="term" value="C:flotillin complex"/>
    <property type="evidence" value="ECO:0007669"/>
    <property type="project" value="TreeGrafter"/>
</dbReference>
<dbReference type="GO" id="GO:0002020">
    <property type="term" value="F:protease binding"/>
    <property type="evidence" value="ECO:0007669"/>
    <property type="project" value="TreeGrafter"/>
</dbReference>
<dbReference type="GO" id="GO:0007155">
    <property type="term" value="P:cell adhesion"/>
    <property type="evidence" value="ECO:0007669"/>
    <property type="project" value="UniProtKB-KW"/>
</dbReference>
<dbReference type="GO" id="GO:0072659">
    <property type="term" value="P:protein localization to plasma membrane"/>
    <property type="evidence" value="ECO:0007669"/>
    <property type="project" value="TreeGrafter"/>
</dbReference>
<dbReference type="GO" id="GO:0045661">
    <property type="term" value="P:regulation of myoblast differentiation"/>
    <property type="evidence" value="ECO:0007669"/>
    <property type="project" value="TreeGrafter"/>
</dbReference>
<dbReference type="CDD" id="cd03399">
    <property type="entry name" value="SPFH_flotillin"/>
    <property type="match status" value="1"/>
</dbReference>
<dbReference type="FunFam" id="3.30.479.30:FF:000003">
    <property type="entry name" value="Flotillin 2"/>
    <property type="match status" value="1"/>
</dbReference>
<dbReference type="Gene3D" id="3.30.479.30">
    <property type="entry name" value="Band 7 domain"/>
    <property type="match status" value="1"/>
</dbReference>
<dbReference type="InterPro" id="IPR001107">
    <property type="entry name" value="Band_7"/>
</dbReference>
<dbReference type="InterPro" id="IPR036013">
    <property type="entry name" value="Band_7/SPFH_dom_sf"/>
</dbReference>
<dbReference type="InterPro" id="IPR031905">
    <property type="entry name" value="Flotillin_C"/>
</dbReference>
<dbReference type="InterPro" id="IPR027705">
    <property type="entry name" value="Flotillin_fam"/>
</dbReference>
<dbReference type="PANTHER" id="PTHR13806:SF46">
    <property type="entry name" value="FLOTILLIN-1-RELATED"/>
    <property type="match status" value="1"/>
</dbReference>
<dbReference type="PANTHER" id="PTHR13806">
    <property type="entry name" value="FLOTILLIN-RELATED"/>
    <property type="match status" value="1"/>
</dbReference>
<dbReference type="Pfam" id="PF01145">
    <property type="entry name" value="Band_7"/>
    <property type="match status" value="1"/>
</dbReference>
<dbReference type="Pfam" id="PF15975">
    <property type="entry name" value="Flot"/>
    <property type="match status" value="1"/>
</dbReference>
<dbReference type="SMART" id="SM00244">
    <property type="entry name" value="PHB"/>
    <property type="match status" value="1"/>
</dbReference>
<dbReference type="SUPFAM" id="SSF117892">
    <property type="entry name" value="Band 7/SPFH domain"/>
    <property type="match status" value="1"/>
</dbReference>
<accession>O42305</accession>
<proteinExistence type="evidence at protein level"/>
<reference key="1">
    <citation type="journal article" date="1997" name="Development">
        <title>Reggie-1 and reggie-2, two cell surface proteins expressed by retinal ganglion cells during axon regeneration.</title>
        <authorList>
            <person name="Schulte T."/>
            <person name="Paschke K.A."/>
            <person name="Laessing U."/>
            <person name="Lottspeich F."/>
            <person name="Stuermer C.A.O."/>
        </authorList>
    </citation>
    <scope>NUCLEOTIDE SEQUENCE [MRNA]</scope>
    <scope>PROTEIN SEQUENCE OF 224-233; 322-335 AND 345-356</scope>
    <source>
        <tissue>Embryo</tissue>
        <tissue>Larva</tissue>
        <tissue>Retina</tissue>
    </source>
</reference>
<protein>
    <recommendedName>
        <fullName>Flotillin-2</fullName>
    </recommendedName>
    <alternativeName>
        <fullName>Reggie-1</fullName>
        <shortName>REG-1</shortName>
    </alternativeName>
</protein>